<name>U17LL_HUMAN</name>
<keyword id="KW-0256">Endoplasmic reticulum</keyword>
<keyword id="KW-0378">Hydrolase</keyword>
<keyword id="KW-0539">Nucleus</keyword>
<keyword id="KW-0645">Protease</keyword>
<keyword id="KW-1185">Reference proteome</keyword>
<keyword id="KW-0788">Thiol protease</keyword>
<keyword id="KW-0833">Ubl conjugation pathway</keyword>
<feature type="chain" id="PRO_0000421095" description="Ubiquitin carboxyl-terminal hydrolase 17-like protein 21">
    <location>
        <begin position="1"/>
        <end position="530"/>
    </location>
</feature>
<feature type="domain" description="USP">
    <location>
        <begin position="80"/>
        <end position="375"/>
    </location>
</feature>
<feature type="region of interest" description="Disordered" evidence="4">
    <location>
        <begin position="382"/>
        <end position="412"/>
    </location>
</feature>
<feature type="region of interest" description="Disordered" evidence="4">
    <location>
        <begin position="477"/>
        <end position="530"/>
    </location>
</feature>
<feature type="compositionally biased region" description="Basic and acidic residues" evidence="4">
    <location>
        <begin position="382"/>
        <end position="392"/>
    </location>
</feature>
<feature type="compositionally biased region" description="Basic and acidic residues" evidence="4">
    <location>
        <begin position="398"/>
        <end position="412"/>
    </location>
</feature>
<feature type="compositionally biased region" description="Polar residues" evidence="4">
    <location>
        <begin position="493"/>
        <end position="505"/>
    </location>
</feature>
<feature type="compositionally biased region" description="Basic residues" evidence="4">
    <location>
        <begin position="510"/>
        <end position="524"/>
    </location>
</feature>
<feature type="active site" description="Nucleophile" evidence="2 3">
    <location>
        <position position="89"/>
    </location>
</feature>
<feature type="active site" description="Proton acceptor" evidence="2 3">
    <location>
        <position position="334"/>
    </location>
</feature>
<reference key="1">
    <citation type="journal article" date="2005" name="Nature">
        <title>Generation and annotation of the DNA sequences of human chromosomes 2 and 4.</title>
        <authorList>
            <person name="Hillier L.W."/>
            <person name="Graves T.A."/>
            <person name="Fulton R.S."/>
            <person name="Fulton L.A."/>
            <person name="Pepin K.H."/>
            <person name="Minx P."/>
            <person name="Wagner-McPherson C."/>
            <person name="Layman D."/>
            <person name="Wylie K."/>
            <person name="Sekhon M."/>
            <person name="Becker M.C."/>
            <person name="Fewell G.A."/>
            <person name="Delehaunty K.D."/>
            <person name="Miner T.L."/>
            <person name="Nash W.E."/>
            <person name="Kremitzki C."/>
            <person name="Oddy L."/>
            <person name="Du H."/>
            <person name="Sun H."/>
            <person name="Bradshaw-Cordum H."/>
            <person name="Ali J."/>
            <person name="Carter J."/>
            <person name="Cordes M."/>
            <person name="Harris A."/>
            <person name="Isak A."/>
            <person name="van Brunt A."/>
            <person name="Nguyen C."/>
            <person name="Du F."/>
            <person name="Courtney L."/>
            <person name="Kalicki J."/>
            <person name="Ozersky P."/>
            <person name="Abbott S."/>
            <person name="Armstrong J."/>
            <person name="Belter E.A."/>
            <person name="Caruso L."/>
            <person name="Cedroni M."/>
            <person name="Cotton M."/>
            <person name="Davidson T."/>
            <person name="Desai A."/>
            <person name="Elliott G."/>
            <person name="Erb T."/>
            <person name="Fronick C."/>
            <person name="Gaige T."/>
            <person name="Haakenson W."/>
            <person name="Haglund K."/>
            <person name="Holmes A."/>
            <person name="Harkins R."/>
            <person name="Kim K."/>
            <person name="Kruchowski S.S."/>
            <person name="Strong C.M."/>
            <person name="Grewal N."/>
            <person name="Goyea E."/>
            <person name="Hou S."/>
            <person name="Levy A."/>
            <person name="Martinka S."/>
            <person name="Mead K."/>
            <person name="McLellan M.D."/>
            <person name="Meyer R."/>
            <person name="Randall-Maher J."/>
            <person name="Tomlinson C."/>
            <person name="Dauphin-Kohlberg S."/>
            <person name="Kozlowicz-Reilly A."/>
            <person name="Shah N."/>
            <person name="Swearengen-Shahid S."/>
            <person name="Snider J."/>
            <person name="Strong J.T."/>
            <person name="Thompson J."/>
            <person name="Yoakum M."/>
            <person name="Leonard S."/>
            <person name="Pearman C."/>
            <person name="Trani L."/>
            <person name="Radionenko M."/>
            <person name="Waligorski J.E."/>
            <person name="Wang C."/>
            <person name="Rock S.M."/>
            <person name="Tin-Wollam A.-M."/>
            <person name="Maupin R."/>
            <person name="Latreille P."/>
            <person name="Wendl M.C."/>
            <person name="Yang S.-P."/>
            <person name="Pohl C."/>
            <person name="Wallis J.W."/>
            <person name="Spieth J."/>
            <person name="Bieri T.A."/>
            <person name="Berkowicz N."/>
            <person name="Nelson J.O."/>
            <person name="Osborne J."/>
            <person name="Ding L."/>
            <person name="Meyer R."/>
            <person name="Sabo A."/>
            <person name="Shotland Y."/>
            <person name="Sinha P."/>
            <person name="Wohldmann P.E."/>
            <person name="Cook L.L."/>
            <person name="Hickenbotham M.T."/>
            <person name="Eldred J."/>
            <person name="Williams D."/>
            <person name="Jones T.A."/>
            <person name="She X."/>
            <person name="Ciccarelli F.D."/>
            <person name="Izaurralde E."/>
            <person name="Taylor J."/>
            <person name="Schmutz J."/>
            <person name="Myers R.M."/>
            <person name="Cox D.R."/>
            <person name="Huang X."/>
            <person name="McPherson J.D."/>
            <person name="Mardis E.R."/>
            <person name="Clifton S.W."/>
            <person name="Warren W.C."/>
            <person name="Chinwalla A.T."/>
            <person name="Eddy S.R."/>
            <person name="Marra M.A."/>
            <person name="Ovcharenko I."/>
            <person name="Furey T.S."/>
            <person name="Miller W."/>
            <person name="Eichler E.E."/>
            <person name="Bork P."/>
            <person name="Suyama M."/>
            <person name="Torrents D."/>
            <person name="Waterston R.H."/>
            <person name="Wilson R.K."/>
        </authorList>
    </citation>
    <scope>NUCLEOTIDE SEQUENCE [LARGE SCALE GENOMIC DNA]</scope>
</reference>
<gene>
    <name type="primary">USP17L21</name>
</gene>
<evidence type="ECO:0000250" key="1"/>
<evidence type="ECO:0000255" key="2">
    <source>
        <dbReference type="PROSITE-ProRule" id="PRU10092"/>
    </source>
</evidence>
<evidence type="ECO:0000255" key="3">
    <source>
        <dbReference type="PROSITE-ProRule" id="PRU10093"/>
    </source>
</evidence>
<evidence type="ECO:0000256" key="4">
    <source>
        <dbReference type="SAM" id="MobiDB-lite"/>
    </source>
</evidence>
<evidence type="ECO:0000305" key="5"/>
<comment type="function">
    <text evidence="1">Deubiquitinating enzyme that removes conjugated ubiquitin from specific proteins to regulate different cellular processes that may include cell proliferation, progression through the cell cycle, apoptosis, cell migration, and the cellular response to viral infection.</text>
</comment>
<comment type="catalytic activity">
    <reaction>
        <text>Thiol-dependent hydrolysis of ester, thioester, amide, peptide and isopeptide bonds formed by the C-terminal Gly of ubiquitin (a 76-residue protein attached to proteins as an intracellular targeting signal).</text>
        <dbReference type="EC" id="3.4.19.12"/>
    </reaction>
</comment>
<comment type="subcellular location">
    <subcellularLocation>
        <location evidence="1">Nucleus</location>
    </subcellularLocation>
    <subcellularLocation>
        <location evidence="1">Endoplasmic reticulum</location>
    </subcellularLocation>
</comment>
<comment type="similarity">
    <text evidence="5">Belongs to the peptidase C19 family. USP17 subfamily.</text>
</comment>
<comment type="caution">
    <text evidence="5">The RS447 megasatellite DNA is a highly polymorphic conserved tandem repetitive sequence which contains a copy of the USP17 gene. It is present with an interindividual variation in copy number, ranging from 20 to 103, and can be found in the genome on chromosome 4 and chromosome 8. The high similarity between the UPS17-like genes makes it impossible to specifically assign data to a particular gene of the family. Oligonucleotides designed in RNAi experiments are for instance not specific for a given UPS17-like gene.</text>
</comment>
<accession>D6R901</accession>
<sequence length="530" mass="59659">MEEDSLYLGGEWQFNHFSKLTSSRPDAAFAEIQRTSLPEKSPLSCETRVDLCDDLAPVARQLAPREKLPLSNRRPAAVGAGLQNMGNTCYVNASLQCLTYTPPLANYMLSREHSQTCHRHKGCMLCTMQAHITRALHNPGHVIQPSQALAAGFHRGKQEDAHEFLMFTVDAMKKACLPGHKQVDHHSKDTTLIHQIFGGYWRSQIKCLHCHGISDTFDPYLDIALDIQAAQSVQQALEQLVKPEELNGENAYHCGVCLQRAPASKMLTLLTSAKVLILVLKRFSDVTGNKIAKNVQYPECLDMQPYMSQPNTGPLVYVLYAVLVHAGWSCHNGHYFSYVKAQEGQWYKMDDAEVTASSITSVLSQQAYVLFYIQKSEWERHSESVSRGREPRALGAEDTDRRATQGELKRDHPCLQAPELDEHLVERATQESTLDHWKFLQEQNKTKPEFNVRKVEGTLPPDVLVIHQSKYKCGMKNHHPEQQSSLLNLSSSTPTHQESMNTGTLASLRGRARRSKGKNKHSKRALLVCQ</sequence>
<protein>
    <recommendedName>
        <fullName>Ubiquitin carboxyl-terminal hydrolase 17-like protein 21</fullName>
        <ecNumber>3.4.19.12</ecNumber>
    </recommendedName>
</protein>
<dbReference type="EC" id="3.4.19.12"/>
<dbReference type="EMBL" id="AC108519">
    <property type="status" value="NOT_ANNOTATED_CDS"/>
    <property type="molecule type" value="Genomic_DNA"/>
</dbReference>
<dbReference type="CCDS" id="CCDS59462.1"/>
<dbReference type="RefSeq" id="NP_001243791.1">
    <property type="nucleotide sequence ID" value="NM_001256862.1"/>
</dbReference>
<dbReference type="SMR" id="D6R901"/>
<dbReference type="BioGRID" id="939139">
    <property type="interactions" value="2"/>
</dbReference>
<dbReference type="FunCoup" id="D6R901">
    <property type="interactions" value="443"/>
</dbReference>
<dbReference type="IntAct" id="D6R901">
    <property type="interactions" value="1"/>
</dbReference>
<dbReference type="STRING" id="9606.ENSP00000422216"/>
<dbReference type="MEROPS" id="C19.A82"/>
<dbReference type="MEROPS" id="C19.A96"/>
<dbReference type="BioMuta" id="USP17L21"/>
<dbReference type="jPOST" id="D6R901"/>
<dbReference type="MassIVE" id="D6R901"/>
<dbReference type="PaxDb" id="9606-ENSP00000422216"/>
<dbReference type="Antibodypedia" id="77551">
    <property type="antibodies" value="3 antibodies from 1 providers"/>
</dbReference>
<dbReference type="DNASU" id="100287478"/>
<dbReference type="Ensembl" id="ENST00000506414.1">
    <property type="protein sequence ID" value="ENSP00000422216.1"/>
    <property type="gene ID" value="ENSG00000249811.3"/>
</dbReference>
<dbReference type="GeneID" id="100287478"/>
<dbReference type="KEGG" id="hsa:100287478"/>
<dbReference type="MANE-Select" id="ENST00000506414.1">
    <property type="protein sequence ID" value="ENSP00000422216.1"/>
    <property type="RefSeq nucleotide sequence ID" value="NM_001256862.1"/>
    <property type="RefSeq protein sequence ID" value="NP_001243791.1"/>
</dbReference>
<dbReference type="UCSC" id="uc031sdo.1">
    <property type="organism name" value="human"/>
</dbReference>
<dbReference type="AGR" id="HGNC:44449"/>
<dbReference type="CTD" id="100287478"/>
<dbReference type="GeneCards" id="USP17L21"/>
<dbReference type="HGNC" id="HGNC:44449">
    <property type="gene designation" value="USP17L21"/>
</dbReference>
<dbReference type="HPA" id="ENSG00000249811">
    <property type="expression patterns" value="Not detected"/>
</dbReference>
<dbReference type="neXtProt" id="NX_D6R901"/>
<dbReference type="VEuPathDB" id="HostDB:ENSG00000249811"/>
<dbReference type="eggNOG" id="KOG1865">
    <property type="taxonomic scope" value="Eukaryota"/>
</dbReference>
<dbReference type="GeneTree" id="ENSGT00940000161948"/>
<dbReference type="InParanoid" id="D6R901"/>
<dbReference type="OrthoDB" id="8832at9604"/>
<dbReference type="PAN-GO" id="D6R901">
    <property type="GO annotations" value="6 GO annotations based on evolutionary models"/>
</dbReference>
<dbReference type="PhylomeDB" id="D6R901"/>
<dbReference type="TreeFam" id="TF315281"/>
<dbReference type="PathwayCommons" id="D6R901"/>
<dbReference type="Reactome" id="R-HSA-5689880">
    <property type="pathway name" value="Ub-specific processing proteases"/>
</dbReference>
<dbReference type="BioGRID-ORCS" id="100287478">
    <property type="hits" value="27 hits in 260 CRISPR screens"/>
</dbReference>
<dbReference type="GenomeRNAi" id="100287478"/>
<dbReference type="Pharos" id="D6R901">
    <property type="development level" value="Tdark"/>
</dbReference>
<dbReference type="PRO" id="PR:D6R901"/>
<dbReference type="Proteomes" id="UP000005640">
    <property type="component" value="Chromosome 4"/>
</dbReference>
<dbReference type="RNAct" id="D6R901">
    <property type="molecule type" value="protein"/>
</dbReference>
<dbReference type="GO" id="GO:0005829">
    <property type="term" value="C:cytosol"/>
    <property type="evidence" value="ECO:0000318"/>
    <property type="project" value="GO_Central"/>
</dbReference>
<dbReference type="GO" id="GO:0005783">
    <property type="term" value="C:endoplasmic reticulum"/>
    <property type="evidence" value="ECO:0007669"/>
    <property type="project" value="UniProtKB-SubCell"/>
</dbReference>
<dbReference type="GO" id="GO:0005634">
    <property type="term" value="C:nucleus"/>
    <property type="evidence" value="ECO:0000318"/>
    <property type="project" value="GO_Central"/>
</dbReference>
<dbReference type="GO" id="GO:0004843">
    <property type="term" value="F:cysteine-type deubiquitinase activity"/>
    <property type="evidence" value="ECO:0000318"/>
    <property type="project" value="GO_Central"/>
</dbReference>
<dbReference type="GO" id="GO:0016579">
    <property type="term" value="P:protein deubiquitination"/>
    <property type="evidence" value="ECO:0007669"/>
    <property type="project" value="InterPro"/>
</dbReference>
<dbReference type="GO" id="GO:0006508">
    <property type="term" value="P:proteolysis"/>
    <property type="evidence" value="ECO:0007669"/>
    <property type="project" value="UniProtKB-KW"/>
</dbReference>
<dbReference type="GO" id="GO:0042981">
    <property type="term" value="P:regulation of apoptotic process"/>
    <property type="evidence" value="ECO:0000318"/>
    <property type="project" value="GO_Central"/>
</dbReference>
<dbReference type="GO" id="GO:0031647">
    <property type="term" value="P:regulation of protein stability"/>
    <property type="evidence" value="ECO:0000318"/>
    <property type="project" value="GO_Central"/>
</dbReference>
<dbReference type="CDD" id="cd02661">
    <property type="entry name" value="Peptidase_C19E"/>
    <property type="match status" value="1"/>
</dbReference>
<dbReference type="FunFam" id="3.90.70.10:FF:000070">
    <property type="entry name" value="Ubiquitin carboxyl-terminal hydrolase 17-like protein 17"/>
    <property type="match status" value="1"/>
</dbReference>
<dbReference type="Gene3D" id="3.90.70.10">
    <property type="entry name" value="Cysteine proteinases"/>
    <property type="match status" value="1"/>
</dbReference>
<dbReference type="InterPro" id="IPR006861">
    <property type="entry name" value="HABP4_PAIRBP1-bd"/>
</dbReference>
<dbReference type="InterPro" id="IPR038765">
    <property type="entry name" value="Papain-like_cys_pep_sf"/>
</dbReference>
<dbReference type="InterPro" id="IPR050164">
    <property type="entry name" value="Peptidase_C19"/>
</dbReference>
<dbReference type="InterPro" id="IPR001394">
    <property type="entry name" value="Peptidase_C19_UCH"/>
</dbReference>
<dbReference type="InterPro" id="IPR018200">
    <property type="entry name" value="USP_CS"/>
</dbReference>
<dbReference type="InterPro" id="IPR028889">
    <property type="entry name" value="USP_dom"/>
</dbReference>
<dbReference type="PANTHER" id="PTHR24006:SF651">
    <property type="entry name" value="INACTIVE UBIQUITIN CARBOXYL-TERMINAL HYDROLASE 17-LIKE PROTEIN 4-RELATED"/>
    <property type="match status" value="1"/>
</dbReference>
<dbReference type="PANTHER" id="PTHR24006">
    <property type="entry name" value="UBIQUITIN CARBOXYL-TERMINAL HYDROLASE"/>
    <property type="match status" value="1"/>
</dbReference>
<dbReference type="Pfam" id="PF04774">
    <property type="entry name" value="HABP4_PAI-RBP1"/>
    <property type="match status" value="1"/>
</dbReference>
<dbReference type="Pfam" id="PF00443">
    <property type="entry name" value="UCH"/>
    <property type="match status" value="1"/>
</dbReference>
<dbReference type="SUPFAM" id="SSF54001">
    <property type="entry name" value="Cysteine proteinases"/>
    <property type="match status" value="1"/>
</dbReference>
<dbReference type="PROSITE" id="PS00972">
    <property type="entry name" value="USP_1"/>
    <property type="match status" value="1"/>
</dbReference>
<dbReference type="PROSITE" id="PS00973">
    <property type="entry name" value="USP_2"/>
    <property type="match status" value="1"/>
</dbReference>
<dbReference type="PROSITE" id="PS50235">
    <property type="entry name" value="USP_3"/>
    <property type="match status" value="1"/>
</dbReference>
<proteinExistence type="inferred from homology"/>
<organism>
    <name type="scientific">Homo sapiens</name>
    <name type="common">Human</name>
    <dbReference type="NCBI Taxonomy" id="9606"/>
    <lineage>
        <taxon>Eukaryota</taxon>
        <taxon>Metazoa</taxon>
        <taxon>Chordata</taxon>
        <taxon>Craniata</taxon>
        <taxon>Vertebrata</taxon>
        <taxon>Euteleostomi</taxon>
        <taxon>Mammalia</taxon>
        <taxon>Eutheria</taxon>
        <taxon>Euarchontoglires</taxon>
        <taxon>Primates</taxon>
        <taxon>Haplorrhini</taxon>
        <taxon>Catarrhini</taxon>
        <taxon>Hominidae</taxon>
        <taxon>Homo</taxon>
    </lineage>
</organism>